<accession>P68425</accession>
<accession>A0A023WBS8</accession>
<accession>B2ZBB7</accession>
<accession>B3FIU6</accession>
<accession>P0DJ77</accession>
<protein>
    <recommendedName>
        <fullName>Kunitz-type kappaPI-theraphotoxin-Hs1a</fullName>
        <shortName>KappaPI-TRTX-Hs1a</shortName>
    </recommendedName>
    <alternativeName>
        <fullName evidence="10">Huwentoxin HW11c5</fullName>
    </alternativeName>
    <alternativeName>
        <fullName evidence="8">Huwentoxin-11g8</fullName>
        <shortName evidence="8">HW11g8</shortName>
    </alternativeName>
    <alternativeName>
        <fullName evidence="6 7 9">Huwentoxin-XI</fullName>
        <shortName evidence="6 7 9">HwTx-XI</shortName>
    </alternativeName>
    <alternativeName>
        <fullName evidence="9">Kunitz-type serine protease inhibitor HWTX-XI-IS5</fullName>
    </alternativeName>
    <alternativeName>
        <fullName>Kunitz-type serine protease inhibitor huwentoxin-11</fullName>
    </alternativeName>
</protein>
<proteinExistence type="evidence at protein level"/>
<feature type="signal peptide" evidence="1">
    <location>
        <begin position="1"/>
        <end position="27"/>
    </location>
</feature>
<feature type="propeptide" id="PRO_0000378335" evidence="3 5">
    <location>
        <begin position="28"/>
        <end position="33"/>
    </location>
</feature>
<feature type="chain" id="PRO_0000087671" description="Kunitz-type kappaPI-theraphotoxin-Hs1a">
    <location>
        <begin position="34"/>
        <end position="88"/>
    </location>
</feature>
<feature type="domain" description="BPTI/Kunitz inhibitor" evidence="2">
    <location>
        <begin position="37"/>
        <end position="85"/>
    </location>
</feature>
<feature type="site" description="May bind Kv1.1/KCNA1">
    <location>
        <position position="39"/>
    </location>
</feature>
<feature type="site" description="Reactive bond for trypsin">
    <location>
        <begin position="47"/>
        <end position="48"/>
    </location>
</feature>
<feature type="disulfide bond" evidence="4 16">
    <location>
        <begin position="37"/>
        <end position="85"/>
    </location>
</feature>
<feature type="disulfide bond" evidence="4 16">
    <location>
        <begin position="46"/>
        <end position="68"/>
    </location>
</feature>
<feature type="disulfide bond" evidence="4 16">
    <location>
        <begin position="60"/>
        <end position="81"/>
    </location>
</feature>
<feature type="mutagenesis site" description="14-fold reduction in inhibitory potency toward Kv1.1/KCNA1." evidence="5">
    <original>R</original>
    <variation>I</variation>
    <location>
        <position position="38"/>
    </location>
</feature>
<feature type="mutagenesis site" description="200-fold reduction in inhibitory potency toward Kv1.1/KCNA1." evidence="5">
    <original>L</original>
    <variation>A</variation>
    <variation>Y</variation>
    <location>
        <position position="39"/>
    </location>
</feature>
<feature type="mutagenesis site" description="No binding to trypsin." evidence="5">
    <original>K</original>
    <variation>A</variation>
    <location>
        <position position="47"/>
    </location>
</feature>
<feature type="sequence conflict" description="In Ref. 3; ABY77743." evidence="11" ref="3">
    <original>H</original>
    <variation>R</variation>
    <location>
        <position position="30"/>
    </location>
</feature>
<feature type="sequence conflict" description="In Ref. 2; no nucleotide entry." evidence="11" ref="2">
    <original>H</original>
    <variation>S</variation>
    <location>
        <position position="30"/>
    </location>
</feature>
<feature type="strand" evidence="17">
    <location>
        <begin position="51"/>
        <end position="56"/>
    </location>
</feature>
<feature type="strand" evidence="17">
    <location>
        <begin position="59"/>
        <end position="64"/>
    </location>
</feature>
<feature type="strand" evidence="17">
    <location>
        <begin position="71"/>
        <end position="77"/>
    </location>
</feature>
<feature type="helix" evidence="17">
    <location>
        <begin position="78"/>
        <end position="85"/>
    </location>
</feature>
<evidence type="ECO:0000255" key="1"/>
<evidence type="ECO:0000255" key="2">
    <source>
        <dbReference type="PROSITE-ProRule" id="PRU00031"/>
    </source>
</evidence>
<evidence type="ECO:0000269" key="3">
    <source>
    </source>
</evidence>
<evidence type="ECO:0000269" key="4">
    <source>
    </source>
</evidence>
<evidence type="ECO:0000269" key="5">
    <source>
    </source>
</evidence>
<evidence type="ECO:0000303" key="6">
    <source>
    </source>
</evidence>
<evidence type="ECO:0000303" key="7">
    <source>
    </source>
</evidence>
<evidence type="ECO:0000303" key="8">
    <source>
    </source>
</evidence>
<evidence type="ECO:0000303" key="9">
    <source>
    </source>
</evidence>
<evidence type="ECO:0000303" key="10">
    <source>
    </source>
</evidence>
<evidence type="ECO:0000305" key="11"/>
<evidence type="ECO:0000305" key="12">
    <source>
    </source>
</evidence>
<evidence type="ECO:0000312" key="13">
    <source>
        <dbReference type="EMBL" id="ABY77743.1"/>
    </source>
</evidence>
<evidence type="ECO:0000312" key="14">
    <source>
        <dbReference type="EMBL" id="ACD01237.1"/>
    </source>
</evidence>
<evidence type="ECO:0000312" key="15">
    <source>
        <dbReference type="EMBL" id="AHY30307.1"/>
    </source>
</evidence>
<evidence type="ECO:0007744" key="16">
    <source>
        <dbReference type="PDB" id="2JOT"/>
    </source>
</evidence>
<evidence type="ECO:0007829" key="17">
    <source>
        <dbReference type="PDB" id="2JOT"/>
    </source>
</evidence>
<name>VKT1A_CYRSC</name>
<comment type="function">
    <text evidence="3 5">Serine protease inhibitor that inhibits trypsin (Ki=5.54 uM) at a molar ratio of 1:1.</text>
</comment>
<comment type="subcellular location">
    <subcellularLocation>
        <location evidence="3 5">Secreted</location>
    </subcellularLocation>
</comment>
<comment type="tissue specificity">
    <text evidence="12">Expressed by the venom gland.</text>
</comment>
<comment type="mass spectrometry" mass="6166.23" method="MALDI" evidence="3"/>
<comment type="toxic dose">
    <text evidence="3">LD(50) is 256 ug/kg by intracerebroventricular injection into mice.</text>
</comment>
<comment type="miscellaneous">
    <text evidence="5">Negative results: shows weak voltage-dependent inhibition of voltage-gated potassium channels. At high doses (5 uM), is more active on Kv1.1/KCNA1 (78% inhibition), than on Kv1.2/KCNA2 (10% inhibition), and Kv1.3/KCNA3 (28% inhibition).</text>
</comment>
<comment type="similarity">
    <text evidence="11">Belongs to the venom Kunitz-type family. 02 (native) subfamily.</text>
</comment>
<reference evidence="14" key="1">
    <citation type="journal article" date="2008" name="Peptides">
        <title>Genomic organization and cloning of novel genes encoding toxin-like peptides of three superfamilies from the spider Orinithoctonus huwena.</title>
        <authorList>
            <person name="Jiang L."/>
            <person name="Chen J."/>
            <person name="Peng L."/>
            <person name="Zhang Y."/>
            <person name="Xiong X."/>
            <person name="Liang S."/>
        </authorList>
    </citation>
    <scope>NUCLEOTIDE SEQUENCE [GENOMIC DNA]</scope>
</reference>
<reference key="2">
    <citation type="journal article" date="2008" name="PLoS ONE">
        <title>Discovery of a distinct superfamily of Kunitz-type toxin (KTT) from tarantulas.</title>
        <authorList>
            <person name="Yuan C.-H."/>
            <person name="He Q.-Y."/>
            <person name="Peng K."/>
            <person name="Diao J.-B."/>
            <person name="Jiang L.-P."/>
            <person name="Tang X."/>
            <person name="Liang S.-P."/>
        </authorList>
    </citation>
    <scope>NUCLEOTIDE SEQUENCE [MRNA]</scope>
    <scope>PROTEIN SEQUENCE OF 34-88</scope>
    <scope>FUNCTION</scope>
    <scope>MUTAGENESIS OF ARG-38; LEU-39 AND LYS-47</scope>
    <scope>IDENTIFICATION BY MASS SPECTROMETRY</scope>
    <scope>SUBCELLULAR LOCATION</scope>
    <source>
        <tissue>Venom</tissue>
        <tissue>Venom gland</tissue>
    </source>
</reference>
<reference evidence="13" key="3">
    <citation type="journal article" date="2008" name="Toxicon">
        <title>Molecular diversification based on analysis of expressed sequence tags from the venom glands of the Chinese bird spider Ornithoctonus huwena.</title>
        <authorList>
            <person name="Jiang L."/>
            <person name="Peng L."/>
            <person name="Chen J."/>
            <person name="Zhang Y."/>
            <person name="Xiong X."/>
            <person name="Liang S."/>
        </authorList>
    </citation>
    <scope>NUCLEOTIDE SEQUENCE [MRNA]</scope>
    <source>
        <tissue>Venom gland</tissue>
    </source>
</reference>
<reference evidence="15" key="4">
    <citation type="journal article" date="2014" name="Peptides">
        <title>Molecular cloning, bioinformatics analysis and functional characterization of HWTX-XI toxin superfamily from the spider Ornithoctonus huwena.</title>
        <authorList>
            <person name="Jiang L."/>
            <person name="Deng M."/>
            <person name="Duan Z."/>
            <person name="Tang X."/>
            <person name="Liang S."/>
        </authorList>
    </citation>
    <scope>NUCLEOTIDE SEQUENCE [GENOMIC DNA]</scope>
</reference>
<reference key="5">
    <citation type="journal article" date="2004" name="Toxicon">
        <title>An overview of peptide toxins from the venom of the Chinese bird spider Selenocosmia huwena Wang [=Ornithoctonus huwena (Wang)].</title>
        <authorList>
            <person name="Liang S.-P."/>
        </authorList>
    </citation>
    <scope>PROTEIN SEQUENCE OF 34-88</scope>
    <scope>FUNCTION</scope>
    <scope>TOXIC DOSE</scope>
    <scope>MASS SPECTROMETRY</scope>
    <scope>SUBCELLULAR LOCATION</scope>
    <source>
        <tissue>Venom</tissue>
    </source>
</reference>
<reference key="6">
    <citation type="journal article" date="2006" name="Acta Biochim. Biophys. Sin.">
        <title>Nuclear magnetic resonance studies on huwentoxin-XI from the Chinese bird spider Ornithoctonus huwena: 15N labeling and sequence-specific 1H, 15N nuclear magnetic resonance assignments.</title>
        <authorList>
            <person name="Peng K."/>
            <person name="Lin Y."/>
            <person name="Liang S.-P."/>
        </authorList>
    </citation>
    <scope>STRUCTURE BY NMR OF 34-88</scope>
    <scope>DISULFIDE BONDS</scope>
    <scope>RECOMBINANT EXPRESSION</scope>
</reference>
<organism>
    <name type="scientific">Cyriopagopus schmidti</name>
    <name type="common">Chinese bird spider</name>
    <name type="synonym">Haplopelma schmidti</name>
    <dbReference type="NCBI Taxonomy" id="29017"/>
    <lineage>
        <taxon>Eukaryota</taxon>
        <taxon>Metazoa</taxon>
        <taxon>Ecdysozoa</taxon>
        <taxon>Arthropoda</taxon>
        <taxon>Chelicerata</taxon>
        <taxon>Arachnida</taxon>
        <taxon>Araneae</taxon>
        <taxon>Mygalomorphae</taxon>
        <taxon>Theraphosidae</taxon>
        <taxon>Cyriopagopus</taxon>
    </lineage>
</organism>
<sequence length="88" mass="9721">MGIARILSAVLFLSVLFVVTFPALLSADHHDGRIDTCRLPSDRGRCKASFERWYFNGRTCAKFIYGGCGGNGNKFPTQEACMKRCAKA</sequence>
<dbReference type="EMBL" id="EU635745">
    <property type="protein sequence ID" value="ACD01237.1"/>
    <property type="molecule type" value="Genomic_DNA"/>
</dbReference>
<dbReference type="EMBL" id="EU195290">
    <property type="protein sequence ID" value="ABY77743.1"/>
    <property type="molecule type" value="mRNA"/>
</dbReference>
<dbReference type="EMBL" id="KF160296">
    <property type="protein sequence ID" value="AHY30307.1"/>
    <property type="molecule type" value="Genomic_DNA"/>
</dbReference>
<dbReference type="PDB" id="2JOT">
    <property type="method" value="NMR"/>
    <property type="chains" value="A=34-88"/>
</dbReference>
<dbReference type="PDBsum" id="2JOT"/>
<dbReference type="BMRB" id="P68425"/>
<dbReference type="SMR" id="P68425"/>
<dbReference type="MEROPS" id="I02.968"/>
<dbReference type="ArachnoServer" id="AS000326">
    <property type="toxin name" value="kappa-theraphotoxin-Hs1a"/>
</dbReference>
<dbReference type="EvolutionaryTrace" id="P68425"/>
<dbReference type="GO" id="GO:0005615">
    <property type="term" value="C:extracellular space"/>
    <property type="evidence" value="ECO:0007669"/>
    <property type="project" value="TreeGrafter"/>
</dbReference>
<dbReference type="GO" id="GO:0015459">
    <property type="term" value="F:potassium channel regulator activity"/>
    <property type="evidence" value="ECO:0007669"/>
    <property type="project" value="UniProtKB-KW"/>
</dbReference>
<dbReference type="GO" id="GO:0004867">
    <property type="term" value="F:serine-type endopeptidase inhibitor activity"/>
    <property type="evidence" value="ECO:0007669"/>
    <property type="project" value="UniProtKB-KW"/>
</dbReference>
<dbReference type="GO" id="GO:0090729">
    <property type="term" value="F:toxin activity"/>
    <property type="evidence" value="ECO:0007669"/>
    <property type="project" value="UniProtKB-KW"/>
</dbReference>
<dbReference type="GO" id="GO:0044562">
    <property type="term" value="P:envenomation resulting in negative regulation of voltage-gated potassium channel activity in another organism"/>
    <property type="evidence" value="ECO:0007669"/>
    <property type="project" value="UniProtKB-ARBA"/>
</dbReference>
<dbReference type="CDD" id="cd22598">
    <property type="entry name" value="Kunitz_huwentoxin"/>
    <property type="match status" value="1"/>
</dbReference>
<dbReference type="FunFam" id="4.10.410.10:FF:000020">
    <property type="entry name" value="Collagen, type VI, alpha 3"/>
    <property type="match status" value="1"/>
</dbReference>
<dbReference type="Gene3D" id="4.10.410.10">
    <property type="entry name" value="Pancreatic trypsin inhibitor Kunitz domain"/>
    <property type="match status" value="1"/>
</dbReference>
<dbReference type="InterPro" id="IPR002223">
    <property type="entry name" value="Kunitz_BPTI"/>
</dbReference>
<dbReference type="InterPro" id="IPR036880">
    <property type="entry name" value="Kunitz_BPTI_sf"/>
</dbReference>
<dbReference type="InterPro" id="IPR020901">
    <property type="entry name" value="Prtase_inh_Kunz-CS"/>
</dbReference>
<dbReference type="InterPro" id="IPR050098">
    <property type="entry name" value="TFPI/VKTCI-like"/>
</dbReference>
<dbReference type="PANTHER" id="PTHR10083:SF374">
    <property type="entry name" value="BPTI_KUNITZ INHIBITOR DOMAIN-CONTAINING PROTEIN"/>
    <property type="match status" value="1"/>
</dbReference>
<dbReference type="PANTHER" id="PTHR10083">
    <property type="entry name" value="KUNITZ-TYPE PROTEASE INHIBITOR-RELATED"/>
    <property type="match status" value="1"/>
</dbReference>
<dbReference type="Pfam" id="PF00014">
    <property type="entry name" value="Kunitz_BPTI"/>
    <property type="match status" value="1"/>
</dbReference>
<dbReference type="PRINTS" id="PR00759">
    <property type="entry name" value="BASICPTASE"/>
</dbReference>
<dbReference type="SMART" id="SM00131">
    <property type="entry name" value="KU"/>
    <property type="match status" value="1"/>
</dbReference>
<dbReference type="SUPFAM" id="SSF57362">
    <property type="entry name" value="BPTI-like"/>
    <property type="match status" value="1"/>
</dbReference>
<dbReference type="PROSITE" id="PS00280">
    <property type="entry name" value="BPTI_KUNITZ_1"/>
    <property type="match status" value="1"/>
</dbReference>
<dbReference type="PROSITE" id="PS50279">
    <property type="entry name" value="BPTI_KUNITZ_2"/>
    <property type="match status" value="1"/>
</dbReference>
<keyword id="KW-0002">3D-structure</keyword>
<keyword id="KW-0903">Direct protein sequencing</keyword>
<keyword id="KW-1015">Disulfide bond</keyword>
<keyword id="KW-0646">Protease inhibitor</keyword>
<keyword id="KW-0964">Secreted</keyword>
<keyword id="KW-0722">Serine protease inhibitor</keyword>
<keyword id="KW-0732">Signal</keyword>